<keyword id="KW-0131">Cell cycle</keyword>
<keyword id="KW-0132">Cell division</keyword>
<keyword id="KW-0238">DNA-binding</keyword>
<keyword id="KW-1185">Reference proteome</keyword>
<name>WHIA_FRACC</name>
<accession>Q2JCI0</accession>
<protein>
    <recommendedName>
        <fullName evidence="1">Probable cell division protein WhiA</fullName>
    </recommendedName>
</protein>
<gene>
    <name evidence="1" type="primary">whiA</name>
    <name type="ordered locus">Francci3_1636</name>
</gene>
<sequence length="325" mass="34557">MTATVKDELSRLRVAKPCCRRAEMAALLRFGGGLHIVGGRIVVEAELDTGATARRLRREVAEVFGFPSTVAVLAAGGLRRSVRYIVRVERDGEQLARSTGLLDQRGRPVRGLPPQVVTGSACDAAAAWRGAFLAHGSLTEPGRSCSLEVTSPGPEAALALVGAARRLGVQAKSRDVRGVDRVVIRDGDAIGALLTRIGAHDSLLAWEERRMRREVRATANRLANFDDANLRRSARAAVAAGARVQAAMRILGDDAPEHLLAAGRLRIEHAQASLEELGALADPPLTKDAVAGRIRRLLALADKRANALGIPNTEASVSPDLLENA</sequence>
<comment type="function">
    <text evidence="1">Involved in cell division and chromosome segregation.</text>
</comment>
<comment type="similarity">
    <text evidence="1">Belongs to the WhiA family.</text>
</comment>
<comment type="sequence caution" evidence="2">
    <conflict type="erroneous initiation">
        <sequence resource="EMBL-CDS" id="ABD11012"/>
    </conflict>
</comment>
<reference key="1">
    <citation type="journal article" date="2007" name="Genome Res.">
        <title>Genome characteristics of facultatively symbiotic Frankia sp. strains reflect host range and host plant biogeography.</title>
        <authorList>
            <person name="Normand P."/>
            <person name="Lapierre P."/>
            <person name="Tisa L.S."/>
            <person name="Gogarten J.P."/>
            <person name="Alloisio N."/>
            <person name="Bagnarol E."/>
            <person name="Bassi C.A."/>
            <person name="Berry A.M."/>
            <person name="Bickhart D.M."/>
            <person name="Choisne N."/>
            <person name="Couloux A."/>
            <person name="Cournoyer B."/>
            <person name="Cruveiller S."/>
            <person name="Daubin V."/>
            <person name="Demange N."/>
            <person name="Francino M.P."/>
            <person name="Goltsman E."/>
            <person name="Huang Y."/>
            <person name="Kopp O.R."/>
            <person name="Labarre L."/>
            <person name="Lapidus A."/>
            <person name="Lavire C."/>
            <person name="Marechal J."/>
            <person name="Martinez M."/>
            <person name="Mastronunzio J.E."/>
            <person name="Mullin B.C."/>
            <person name="Niemann J."/>
            <person name="Pujic P."/>
            <person name="Rawnsley T."/>
            <person name="Rouy Z."/>
            <person name="Schenowitz C."/>
            <person name="Sellstedt A."/>
            <person name="Tavares F."/>
            <person name="Tomkins J.P."/>
            <person name="Vallenet D."/>
            <person name="Valverde C."/>
            <person name="Wall L.G."/>
            <person name="Wang Y."/>
            <person name="Medigue C."/>
            <person name="Benson D.R."/>
        </authorList>
    </citation>
    <scope>NUCLEOTIDE SEQUENCE [LARGE SCALE GENOMIC DNA]</scope>
    <source>
        <strain>DSM 45818 / CECT 9043 / HFP020203 / CcI3</strain>
    </source>
</reference>
<organism>
    <name type="scientific">Frankia casuarinae (strain DSM 45818 / CECT 9043 / HFP020203 / CcI3)</name>
    <dbReference type="NCBI Taxonomy" id="106370"/>
    <lineage>
        <taxon>Bacteria</taxon>
        <taxon>Bacillati</taxon>
        <taxon>Actinomycetota</taxon>
        <taxon>Actinomycetes</taxon>
        <taxon>Frankiales</taxon>
        <taxon>Frankiaceae</taxon>
        <taxon>Frankia</taxon>
    </lineage>
</organism>
<dbReference type="EMBL" id="CP000249">
    <property type="protein sequence ID" value="ABD11012.1"/>
    <property type="status" value="ALT_INIT"/>
    <property type="molecule type" value="Genomic_DNA"/>
</dbReference>
<dbReference type="RefSeq" id="WP_076804536.1">
    <property type="nucleotide sequence ID" value="NC_007777.1"/>
</dbReference>
<dbReference type="SMR" id="Q2JCI0"/>
<dbReference type="STRING" id="106370.Francci3_1636"/>
<dbReference type="KEGG" id="fra:Francci3_1636"/>
<dbReference type="eggNOG" id="COG1481">
    <property type="taxonomic scope" value="Bacteria"/>
</dbReference>
<dbReference type="HOGENOM" id="CLU_053282_0_0_11"/>
<dbReference type="Proteomes" id="UP000001937">
    <property type="component" value="Chromosome"/>
</dbReference>
<dbReference type="GO" id="GO:0003677">
    <property type="term" value="F:DNA binding"/>
    <property type="evidence" value="ECO:0007669"/>
    <property type="project" value="UniProtKB-UniRule"/>
</dbReference>
<dbReference type="GO" id="GO:0051301">
    <property type="term" value="P:cell division"/>
    <property type="evidence" value="ECO:0007669"/>
    <property type="project" value="UniProtKB-UniRule"/>
</dbReference>
<dbReference type="GO" id="GO:0043937">
    <property type="term" value="P:regulation of sporulation"/>
    <property type="evidence" value="ECO:0007669"/>
    <property type="project" value="InterPro"/>
</dbReference>
<dbReference type="FunFam" id="3.10.28.10:FF:000001">
    <property type="entry name" value="Probable cell division protein WhiA"/>
    <property type="match status" value="1"/>
</dbReference>
<dbReference type="Gene3D" id="3.10.28.10">
    <property type="entry name" value="Homing endonucleases"/>
    <property type="match status" value="1"/>
</dbReference>
<dbReference type="HAMAP" id="MF_01420">
    <property type="entry name" value="HTH_type_WhiA"/>
    <property type="match status" value="1"/>
</dbReference>
<dbReference type="InterPro" id="IPR027434">
    <property type="entry name" value="Homing_endonucl"/>
</dbReference>
<dbReference type="InterPro" id="IPR018478">
    <property type="entry name" value="Sporu_reg_WhiA_N_dom"/>
</dbReference>
<dbReference type="InterPro" id="IPR003802">
    <property type="entry name" value="Sporulation_regulator_WhiA"/>
</dbReference>
<dbReference type="InterPro" id="IPR023054">
    <property type="entry name" value="Sporulation_regulator_WhiA_C"/>
</dbReference>
<dbReference type="InterPro" id="IPR039518">
    <property type="entry name" value="WhiA_LAGLIDADG_dom"/>
</dbReference>
<dbReference type="NCBIfam" id="TIGR00647">
    <property type="entry name" value="DNA_bind_WhiA"/>
    <property type="match status" value="1"/>
</dbReference>
<dbReference type="PANTHER" id="PTHR37307">
    <property type="entry name" value="CELL DIVISION PROTEIN WHIA-RELATED"/>
    <property type="match status" value="1"/>
</dbReference>
<dbReference type="PANTHER" id="PTHR37307:SF1">
    <property type="entry name" value="CELL DIVISION PROTEIN WHIA-RELATED"/>
    <property type="match status" value="1"/>
</dbReference>
<dbReference type="Pfam" id="PF02650">
    <property type="entry name" value="HTH_WhiA"/>
    <property type="match status" value="1"/>
</dbReference>
<dbReference type="Pfam" id="PF14527">
    <property type="entry name" value="LAGLIDADG_WhiA"/>
    <property type="match status" value="1"/>
</dbReference>
<dbReference type="Pfam" id="PF10298">
    <property type="entry name" value="WhiA_N"/>
    <property type="match status" value="1"/>
</dbReference>
<proteinExistence type="inferred from homology"/>
<evidence type="ECO:0000255" key="1">
    <source>
        <dbReference type="HAMAP-Rule" id="MF_01420"/>
    </source>
</evidence>
<evidence type="ECO:0000305" key="2"/>
<feature type="chain" id="PRO_0000376485" description="Probable cell division protein WhiA">
    <location>
        <begin position="1"/>
        <end position="325"/>
    </location>
</feature>
<feature type="DNA-binding region" description="H-T-H motif" evidence="1">
    <location>
        <begin position="273"/>
        <end position="306"/>
    </location>
</feature>